<protein>
    <recommendedName>
        <fullName>Aquaporin</fullName>
    </recommendedName>
</protein>
<name>AQP_VAIC1</name>
<gene>
    <name type="primary">AQP</name>
    <name type="ORF">NCER_102220</name>
</gene>
<dbReference type="EMBL" id="ACOL01000674">
    <property type="protein sequence ID" value="EEQ81370.1"/>
    <property type="molecule type" value="Genomic_DNA"/>
</dbReference>
<dbReference type="RefSeq" id="XP_002995041.1">
    <property type="nucleotide sequence ID" value="XM_002994995.1"/>
</dbReference>
<dbReference type="SMR" id="C4VBN2"/>
<dbReference type="STRING" id="578460.C4VBN2"/>
<dbReference type="KEGG" id="nce:NCER_102220"/>
<dbReference type="VEuPathDB" id="MicrosporidiaDB:NCER_102220"/>
<dbReference type="HOGENOM" id="CLU_020019_3_4_1"/>
<dbReference type="InParanoid" id="C4VBN2"/>
<dbReference type="OMA" id="RAFLYWI"/>
<dbReference type="OrthoDB" id="5921at6029"/>
<dbReference type="Proteomes" id="UP000009082">
    <property type="component" value="Unassembled WGS sequence"/>
</dbReference>
<dbReference type="GO" id="GO:0005886">
    <property type="term" value="C:plasma membrane"/>
    <property type="evidence" value="ECO:0007669"/>
    <property type="project" value="UniProtKB-SubCell"/>
</dbReference>
<dbReference type="GO" id="GO:0015250">
    <property type="term" value="F:water channel activity"/>
    <property type="evidence" value="ECO:0007669"/>
    <property type="project" value="TreeGrafter"/>
</dbReference>
<dbReference type="Gene3D" id="1.20.1080.10">
    <property type="entry name" value="Glycerol uptake facilitator protein"/>
    <property type="match status" value="1"/>
</dbReference>
<dbReference type="InterPro" id="IPR023271">
    <property type="entry name" value="Aquaporin-like"/>
</dbReference>
<dbReference type="InterPro" id="IPR034294">
    <property type="entry name" value="Aquaporin_transptr"/>
</dbReference>
<dbReference type="InterPro" id="IPR000425">
    <property type="entry name" value="MIP"/>
</dbReference>
<dbReference type="InterPro" id="IPR022357">
    <property type="entry name" value="MIP_CS"/>
</dbReference>
<dbReference type="PANTHER" id="PTHR19139">
    <property type="entry name" value="AQUAPORIN TRANSPORTER"/>
    <property type="match status" value="1"/>
</dbReference>
<dbReference type="PANTHER" id="PTHR19139:SF199">
    <property type="entry name" value="MIP17260P"/>
    <property type="match status" value="1"/>
</dbReference>
<dbReference type="Pfam" id="PF00230">
    <property type="entry name" value="MIP"/>
    <property type="match status" value="1"/>
</dbReference>
<dbReference type="PRINTS" id="PR00783">
    <property type="entry name" value="MINTRINSICP"/>
</dbReference>
<dbReference type="SUPFAM" id="SSF81338">
    <property type="entry name" value="Aquaporin-like"/>
    <property type="match status" value="1"/>
</dbReference>
<dbReference type="PROSITE" id="PS00221">
    <property type="entry name" value="MIP"/>
    <property type="match status" value="1"/>
</dbReference>
<organism>
    <name type="scientific">Vairimorpha ceranae (strain BRL01)</name>
    <name type="common">Microsporidian parasite</name>
    <name type="synonym">Nosema ceranae</name>
    <dbReference type="NCBI Taxonomy" id="578460"/>
    <lineage>
        <taxon>Eukaryota</taxon>
        <taxon>Fungi</taxon>
        <taxon>Fungi incertae sedis</taxon>
        <taxon>Microsporidia</taxon>
        <taxon>Nosematidae</taxon>
        <taxon>Vairimorpha</taxon>
    </lineage>
</organism>
<accession>C4VBN2</accession>
<evidence type="ECO:0000250" key="1"/>
<evidence type="ECO:0000255" key="2"/>
<evidence type="ECO:0000305" key="3"/>
<keyword id="KW-1003">Cell membrane</keyword>
<keyword id="KW-0472">Membrane</keyword>
<keyword id="KW-1185">Reference proteome</keyword>
<keyword id="KW-0677">Repeat</keyword>
<keyword id="KW-0812">Transmembrane</keyword>
<keyword id="KW-1133">Transmembrane helix</keyword>
<keyword id="KW-0813">Transport</keyword>
<sequence>MTRKWIKKLQSYIGEFFASFIFGFAVYTSIIGSAQTGQSAGPIIVALTIALSGVAIIYSFCDITVAHFNPAITFSAMCFRRLPFFGGIFIIIFQVAGFIIAGLASVAVLPGKYKNKLEIARPKRVADNVSRGRIFGTEFFLTAILVYVAFAVGVNPYTPPKDEHGDQLDPDEGLTEGRKITAPLAIGFTLGFCALLGIASSGGAFNPGIVLSPMILTGTWDFWWVYLLGQFSGGLLGGGLQRFLLYKIF</sequence>
<proteinExistence type="inferred from homology"/>
<reference key="1">
    <citation type="journal article" date="2009" name="PLoS Pathog.">
        <title>Genomic analyses of the microsporidian Nosema ceranae, an emergent pathogen of honey bees.</title>
        <authorList>
            <person name="Cornman R.S."/>
            <person name="Chen Y.P."/>
            <person name="Schatz M.C."/>
            <person name="Street C."/>
            <person name="Zhao Y."/>
            <person name="Desany B."/>
            <person name="Egholm M."/>
            <person name="Hutchison S."/>
            <person name="Pettis J.S."/>
            <person name="Lipkin W.I."/>
            <person name="Evans J.D."/>
        </authorList>
    </citation>
    <scope>NUCLEOTIDE SEQUENCE [LARGE SCALE GENOMIC DNA]</scope>
    <source>
        <strain>BRL01</strain>
    </source>
</reference>
<feature type="chain" id="PRO_0000390774" description="Aquaporin">
    <location>
        <begin position="1"/>
        <end position="249"/>
    </location>
</feature>
<feature type="topological domain" description="Cytoplasmic" evidence="2">
    <location>
        <begin position="1"/>
        <end position="11"/>
    </location>
</feature>
<feature type="transmembrane region" description="Helical" evidence="2">
    <location>
        <begin position="12"/>
        <end position="32"/>
    </location>
</feature>
<feature type="topological domain" description="Extracellular" evidence="2">
    <location>
        <begin position="33"/>
        <end position="39"/>
    </location>
</feature>
<feature type="transmembrane region" description="Helical" evidence="2">
    <location>
        <begin position="40"/>
        <end position="60"/>
    </location>
</feature>
<feature type="topological domain" description="Cytoplasmic" evidence="2">
    <location>
        <begin position="61"/>
        <end position="83"/>
    </location>
</feature>
<feature type="transmembrane region" description="Helical" evidence="2">
    <location>
        <begin position="84"/>
        <end position="104"/>
    </location>
</feature>
<feature type="topological domain" description="Extracellular" evidence="2">
    <location>
        <begin position="105"/>
        <end position="133"/>
    </location>
</feature>
<feature type="transmembrane region" description="Helical" evidence="2">
    <location>
        <begin position="134"/>
        <end position="154"/>
    </location>
</feature>
<feature type="topological domain" description="Cytoplasmic" evidence="2">
    <location>
        <begin position="155"/>
        <end position="179"/>
    </location>
</feature>
<feature type="transmembrane region" description="Helical" evidence="2">
    <location>
        <begin position="180"/>
        <end position="200"/>
    </location>
</feature>
<feature type="topological domain" description="Extracellular" evidence="2">
    <location>
        <begin position="201"/>
        <end position="223"/>
    </location>
</feature>
<feature type="transmembrane region" description="Helical" evidence="2">
    <location>
        <begin position="224"/>
        <end position="246"/>
    </location>
</feature>
<feature type="topological domain" description="Cytoplasmic" evidence="2">
    <location>
        <begin position="247"/>
        <end position="249"/>
    </location>
</feature>
<feature type="short sequence motif" description="NPA">
    <location>
        <begin position="69"/>
        <end position="71"/>
    </location>
</feature>
<feature type="short sequence motif" description="NPG">
    <location>
        <begin position="206"/>
        <end position="208"/>
    </location>
</feature>
<comment type="function">
    <text evidence="1">Water channel required to facilitate the transport of water across membranes. Involved in osmotolerance (By similarity).</text>
</comment>
<comment type="subcellular location">
    <subcellularLocation>
        <location evidence="1">Cell membrane</location>
        <topology evidence="1">Multi-pass membrane protein</topology>
    </subcellularLocation>
</comment>
<comment type="domain">
    <text>Aquaporins contain two tandem repeats each containing three membrane-spanning domains and a pore-forming loop with the signature motif Asn-Pro-Ala (NPA). In microsporidia, the second signature motif differs slightly and is Asn-Pro-Gly (NPG).</text>
</comment>
<comment type="similarity">
    <text evidence="3">Belongs to the MIP/aquaporin (TC 1.A.8) family.</text>
</comment>